<proteinExistence type="evidence at protein level"/>
<organism>
    <name type="scientific">Bos taurus</name>
    <name type="common">Bovine</name>
    <dbReference type="NCBI Taxonomy" id="9913"/>
    <lineage>
        <taxon>Eukaryota</taxon>
        <taxon>Metazoa</taxon>
        <taxon>Chordata</taxon>
        <taxon>Craniata</taxon>
        <taxon>Vertebrata</taxon>
        <taxon>Euteleostomi</taxon>
        <taxon>Mammalia</taxon>
        <taxon>Eutheria</taxon>
        <taxon>Laurasiatheria</taxon>
        <taxon>Artiodactyla</taxon>
        <taxon>Ruminantia</taxon>
        <taxon>Pecora</taxon>
        <taxon>Bovidae</taxon>
        <taxon>Bovinae</taxon>
        <taxon>Bos</taxon>
    </lineage>
</organism>
<dbReference type="EMBL" id="D89056">
    <property type="protein sequence ID" value="BAA13754.1"/>
    <property type="molecule type" value="mRNA"/>
</dbReference>
<dbReference type="EMBL" id="BC103192">
    <property type="protein sequence ID" value="AAI03193.1"/>
    <property type="molecule type" value="mRNA"/>
</dbReference>
<dbReference type="PIR" id="A53217">
    <property type="entry name" value="A53217"/>
</dbReference>
<dbReference type="RefSeq" id="NP_777020.1">
    <property type="nucleotide sequence ID" value="NM_174595.2"/>
</dbReference>
<dbReference type="SMR" id="P35466"/>
<dbReference type="FunCoup" id="P35466">
    <property type="interactions" value="288"/>
</dbReference>
<dbReference type="STRING" id="9913.ENSBTAP00000025561"/>
<dbReference type="iPTMnet" id="P35466"/>
<dbReference type="PaxDb" id="9913-ENSBTAP00000025561"/>
<dbReference type="PeptideAtlas" id="P35466"/>
<dbReference type="GeneID" id="282343"/>
<dbReference type="KEGG" id="bta:282343"/>
<dbReference type="CTD" id="6275"/>
<dbReference type="VEuPathDB" id="HostDB:ENSBTAG00000019203"/>
<dbReference type="eggNOG" id="ENOG502S4AU">
    <property type="taxonomic scope" value="Eukaryota"/>
</dbReference>
<dbReference type="HOGENOM" id="CLU_138624_2_0_1"/>
<dbReference type="InParanoid" id="P35466"/>
<dbReference type="OMA" id="QDLPDKM"/>
<dbReference type="OrthoDB" id="8881129at2759"/>
<dbReference type="TreeFam" id="TF332727"/>
<dbReference type="Proteomes" id="UP000009136">
    <property type="component" value="Chromosome 3"/>
</dbReference>
<dbReference type="Bgee" id="ENSBTAG00000019203">
    <property type="expression patterns" value="Expressed in aorta and 101 other cell types or tissues"/>
</dbReference>
<dbReference type="GO" id="GO:0005615">
    <property type="term" value="C:extracellular space"/>
    <property type="evidence" value="ECO:0000318"/>
    <property type="project" value="GO_Central"/>
</dbReference>
<dbReference type="GO" id="GO:0005634">
    <property type="term" value="C:nucleus"/>
    <property type="evidence" value="ECO:0000318"/>
    <property type="project" value="GO_Central"/>
</dbReference>
<dbReference type="GO" id="GO:0048471">
    <property type="term" value="C:perinuclear region of cytoplasm"/>
    <property type="evidence" value="ECO:0000318"/>
    <property type="project" value="GO_Central"/>
</dbReference>
<dbReference type="GO" id="GO:0005509">
    <property type="term" value="F:calcium ion binding"/>
    <property type="evidence" value="ECO:0000250"/>
    <property type="project" value="AgBase"/>
</dbReference>
<dbReference type="GO" id="GO:0048306">
    <property type="term" value="F:calcium-dependent protein binding"/>
    <property type="evidence" value="ECO:0000318"/>
    <property type="project" value="GO_Central"/>
</dbReference>
<dbReference type="GO" id="GO:0050786">
    <property type="term" value="F:RAGE receptor binding"/>
    <property type="evidence" value="ECO:0000318"/>
    <property type="project" value="GO_Central"/>
</dbReference>
<dbReference type="GO" id="GO:0046914">
    <property type="term" value="F:transition metal ion binding"/>
    <property type="evidence" value="ECO:0007669"/>
    <property type="project" value="InterPro"/>
</dbReference>
<dbReference type="GO" id="GO:0043123">
    <property type="term" value="P:positive regulation of canonical NF-kappaB signal transduction"/>
    <property type="evidence" value="ECO:0000318"/>
    <property type="project" value="GO_Central"/>
</dbReference>
<dbReference type="CDD" id="cd00213">
    <property type="entry name" value="S-100"/>
    <property type="match status" value="1"/>
</dbReference>
<dbReference type="FunFam" id="1.10.238.10:FF:000044">
    <property type="entry name" value="Protein S100"/>
    <property type="match status" value="1"/>
</dbReference>
<dbReference type="Gene3D" id="1.10.238.10">
    <property type="entry name" value="EF-hand"/>
    <property type="match status" value="1"/>
</dbReference>
<dbReference type="InterPro" id="IPR011992">
    <property type="entry name" value="EF-hand-dom_pair"/>
</dbReference>
<dbReference type="InterPro" id="IPR018247">
    <property type="entry name" value="EF_Hand_1_Ca_BS"/>
</dbReference>
<dbReference type="InterPro" id="IPR002048">
    <property type="entry name" value="EF_hand_dom"/>
</dbReference>
<dbReference type="InterPro" id="IPR034325">
    <property type="entry name" value="S-100_dom"/>
</dbReference>
<dbReference type="InterPro" id="IPR001751">
    <property type="entry name" value="S100/CaBP7/8-like_CS"/>
</dbReference>
<dbReference type="InterPro" id="IPR013787">
    <property type="entry name" value="S100_Ca-bd_sub"/>
</dbReference>
<dbReference type="PANTHER" id="PTHR11639:SF51">
    <property type="entry name" value="PROTEIN S100-A4"/>
    <property type="match status" value="1"/>
</dbReference>
<dbReference type="PANTHER" id="PTHR11639">
    <property type="entry name" value="S100 CALCIUM-BINDING PROTEIN"/>
    <property type="match status" value="1"/>
</dbReference>
<dbReference type="Pfam" id="PF01023">
    <property type="entry name" value="S_100"/>
    <property type="match status" value="1"/>
</dbReference>
<dbReference type="SMART" id="SM00054">
    <property type="entry name" value="EFh"/>
    <property type="match status" value="1"/>
</dbReference>
<dbReference type="SMART" id="SM01394">
    <property type="entry name" value="S_100"/>
    <property type="match status" value="1"/>
</dbReference>
<dbReference type="SUPFAM" id="SSF47473">
    <property type="entry name" value="EF-hand"/>
    <property type="match status" value="1"/>
</dbReference>
<dbReference type="PROSITE" id="PS00018">
    <property type="entry name" value="EF_HAND_1"/>
    <property type="match status" value="1"/>
</dbReference>
<dbReference type="PROSITE" id="PS50222">
    <property type="entry name" value="EF_HAND_2"/>
    <property type="match status" value="1"/>
</dbReference>
<dbReference type="PROSITE" id="PS00303">
    <property type="entry name" value="S100_CABP"/>
    <property type="match status" value="1"/>
</dbReference>
<keyword id="KW-0007">Acetylation</keyword>
<keyword id="KW-0106">Calcium</keyword>
<keyword id="KW-0963">Cytoplasm</keyword>
<keyword id="KW-0903">Direct protein sequencing</keyword>
<keyword id="KW-0479">Metal-binding</keyword>
<keyword id="KW-0539">Nucleus</keyword>
<keyword id="KW-1185">Reference proteome</keyword>
<keyword id="KW-0677">Repeat</keyword>
<keyword id="KW-0964">Secreted</keyword>
<comment type="function">
    <text evidence="1 2">Calcium-binding protein that plays a role in various cellular processes including motility, angiogenesis, cell differentiation, apoptosis, and autophagy. Increases cell motility and invasiveness by interacting with non-muscle myosin heavy chain (NMMHC) IIA/MYH9 (By similarity). Mechanistically, promotes filament depolymerization and increases the amount of soluble myosin-IIA, resulting in the formation of stable protrusions facilitating chemotaxis (By similarity). Also modulates the pro-apoptotic function of TP53 by binding to its C-terminal transactivation domain within the nucleus and reducing its protein levels (By similarity). Within the extracellular space, stimulates cytokine production including granulocyte colony-stimulating factor and CCL24 from T-lymphocytes (By similarity). In addition, stimulates T-lymphocyte chemotaxis by acting as a chemoattractant complex with PGLYRP1 that promotes lymphocyte migration via CCR5 and CXCR3 receptors (By similarity).</text>
</comment>
<comment type="subunit">
    <text evidence="2">Homodimer. Interacts with PPFIBP1 in a calcium-dependent mode. Interacts with PGLYRP1; this complex acts as a chemoattractant that promotes lymphocyte movement. Interacts with MYH9; this interaction increases cell motility. Interacts with Annexin 2/ANXA2. Interacts with TP53; this interaction promotes TP53 degradation. Interacts with CCR5 and CXCR3. Interacts with FCGR3A; this interaction inhibits PKC-dependent phosphorylation of FCGR3A.</text>
</comment>
<comment type="subcellular location">
    <subcellularLocation>
        <location evidence="2">Secreted</location>
    </subcellularLocation>
    <subcellularLocation>
        <location evidence="2">Nucleus</location>
    </subcellularLocation>
    <subcellularLocation>
        <location evidence="1">Cytoplasm</location>
    </subcellularLocation>
</comment>
<comment type="similarity">
    <text evidence="5">Belongs to the S-100 family.</text>
</comment>
<evidence type="ECO:0000250" key="1">
    <source>
        <dbReference type="UniProtKB" id="P07091"/>
    </source>
</evidence>
<evidence type="ECO:0000250" key="2">
    <source>
        <dbReference type="UniProtKB" id="P26447"/>
    </source>
</evidence>
<evidence type="ECO:0000255" key="3">
    <source>
        <dbReference type="PROSITE-ProRule" id="PRU00448"/>
    </source>
</evidence>
<evidence type="ECO:0000269" key="4">
    <source>
    </source>
</evidence>
<evidence type="ECO:0000305" key="5"/>
<reference key="1">
    <citation type="journal article" date="1998" name="J. Dent. Res.">
        <title>cDNA cloning of S100 calcium-binding proteins from bovine periodontal ligament and their expression in oral tissues.</title>
        <authorList>
            <person name="Duarte W.R."/>
            <person name="Kasugai S."/>
            <person name="Iimura T."/>
            <person name="Oida S."/>
            <person name="Takenaga K."/>
            <person name="Ohya K."/>
            <person name="Ishikawa I."/>
        </authorList>
    </citation>
    <scope>NUCLEOTIDE SEQUENCE [MRNA]</scope>
</reference>
<reference key="2">
    <citation type="submission" date="2005-08" db="EMBL/GenBank/DDBJ databases">
        <authorList>
            <consortium name="NIH - Mammalian Gene Collection (MGC) project"/>
        </authorList>
    </citation>
    <scope>NUCLEOTIDE SEQUENCE [LARGE SCALE MRNA]</scope>
    <source>
        <strain>Hereford</strain>
        <tissue>Heart ventricle</tissue>
    </source>
</reference>
<reference key="3">
    <citation type="journal article" date="1994" name="J. Biol. Chem.">
        <title>Purification and primary structure of Capl, an S-100-related calcium-binding protein isolated from bovine retina.</title>
        <authorList>
            <person name="Polans A.S."/>
            <person name="Palczewski K."/>
            <person name="Asson-Batres M.A."/>
            <person name="Ohguro H."/>
            <person name="Witowska D."/>
            <person name="Haley T.L."/>
            <person name="Baizer L."/>
            <person name="Crabb J.W."/>
        </authorList>
    </citation>
    <scope>PROTEIN SEQUENCE OF 2-101</scope>
    <scope>ACETYLATION AT ALA-2</scope>
    <source>
        <tissue>Retina</tissue>
    </source>
</reference>
<sequence>MAYPLEKALDVMVSTFHKYSGKEGDKFKLNKSELKELLTRELPSFLGKRTDETAFQKLMSNLDCNKDNEVDFQEYCVFLSCIAMMCNEFFEGFPDKQPRKK</sequence>
<feature type="initiator methionine" description="Removed" evidence="4">
    <location>
        <position position="1"/>
    </location>
</feature>
<feature type="chain" id="PRO_0000143975" description="Protein S100-A4">
    <location>
        <begin position="2"/>
        <end position="101"/>
    </location>
</feature>
<feature type="domain" description="EF-hand 1" evidence="5">
    <location>
        <begin position="13"/>
        <end position="48"/>
    </location>
</feature>
<feature type="domain" description="EF-hand 2" evidence="3">
    <location>
        <begin position="50"/>
        <end position="85"/>
    </location>
</feature>
<feature type="binding site" evidence="5">
    <location>
        <position position="28"/>
    </location>
    <ligand>
        <name>Ca(2+)</name>
        <dbReference type="ChEBI" id="CHEBI:29108"/>
        <label>1</label>
        <note>low affinity</note>
    </ligand>
</feature>
<feature type="binding site" evidence="5">
    <location>
        <position position="33"/>
    </location>
    <ligand>
        <name>Ca(2+)</name>
        <dbReference type="ChEBI" id="CHEBI:29108"/>
        <label>1</label>
        <note>low affinity</note>
    </ligand>
</feature>
<feature type="binding site" evidence="3">
    <location>
        <position position="63"/>
    </location>
    <ligand>
        <name>Ca(2+)</name>
        <dbReference type="ChEBI" id="CHEBI:29108"/>
        <label>2</label>
        <note>high affinity</note>
    </ligand>
</feature>
<feature type="binding site" evidence="3">
    <location>
        <position position="65"/>
    </location>
    <ligand>
        <name>Ca(2+)</name>
        <dbReference type="ChEBI" id="CHEBI:29108"/>
        <label>2</label>
        <note>high affinity</note>
    </ligand>
</feature>
<feature type="binding site" evidence="3">
    <location>
        <position position="67"/>
    </location>
    <ligand>
        <name>Ca(2+)</name>
        <dbReference type="ChEBI" id="CHEBI:29108"/>
        <label>2</label>
        <note>high affinity</note>
    </ligand>
</feature>
<feature type="binding site" evidence="3">
    <location>
        <position position="69"/>
    </location>
    <ligand>
        <name>Ca(2+)</name>
        <dbReference type="ChEBI" id="CHEBI:29108"/>
        <label>2</label>
        <note>high affinity</note>
    </ligand>
</feature>
<feature type="binding site" evidence="3">
    <location>
        <position position="74"/>
    </location>
    <ligand>
        <name>Ca(2+)</name>
        <dbReference type="ChEBI" id="CHEBI:29108"/>
        <label>2</label>
        <note>high affinity</note>
    </ligand>
</feature>
<feature type="modified residue" description="N-acetylalanine" evidence="4">
    <location>
        <position position="2"/>
    </location>
</feature>
<feature type="modified residue" description="N6-acetyllysine" evidence="2">
    <location>
        <position position="7"/>
    </location>
</feature>
<feature type="modified residue" description="N6-acetyllysine" evidence="2">
    <location>
        <position position="35"/>
    </location>
</feature>
<accession>P35466</accession>
<accession>Q3ZBN9</accession>
<protein>
    <recommendedName>
        <fullName>Protein S100-A4</fullName>
    </recommendedName>
    <alternativeName>
        <fullName>Metastasin</fullName>
    </alternativeName>
    <alternativeName>
        <fullName>Placental calcium-binding protein homolog</fullName>
    </alternativeName>
    <alternativeName>
        <fullName>S100 calcium-binding protein A4</fullName>
    </alternativeName>
</protein>
<name>S10A4_BOVIN</name>
<gene>
    <name type="primary">S100A4</name>
    <name type="synonym">CAPL</name>
</gene>